<organism>
    <name type="scientific">Chlorobium phaeobacteroides (strain DSM 266 / SMG 266 / 2430)</name>
    <dbReference type="NCBI Taxonomy" id="290317"/>
    <lineage>
        <taxon>Bacteria</taxon>
        <taxon>Pseudomonadati</taxon>
        <taxon>Chlorobiota</taxon>
        <taxon>Chlorobiia</taxon>
        <taxon>Chlorobiales</taxon>
        <taxon>Chlorobiaceae</taxon>
        <taxon>Chlorobium/Pelodictyon group</taxon>
        <taxon>Chlorobium</taxon>
    </lineage>
</organism>
<reference key="1">
    <citation type="submission" date="2006-12" db="EMBL/GenBank/DDBJ databases">
        <title>Complete sequence of Chlorobium phaeobacteroides DSM 266.</title>
        <authorList>
            <consortium name="US DOE Joint Genome Institute"/>
            <person name="Copeland A."/>
            <person name="Lucas S."/>
            <person name="Lapidus A."/>
            <person name="Barry K."/>
            <person name="Detter J.C."/>
            <person name="Glavina del Rio T."/>
            <person name="Hammon N."/>
            <person name="Israni S."/>
            <person name="Pitluck S."/>
            <person name="Goltsman E."/>
            <person name="Schmutz J."/>
            <person name="Larimer F."/>
            <person name="Land M."/>
            <person name="Hauser L."/>
            <person name="Mikhailova N."/>
            <person name="Li T."/>
            <person name="Overmann J."/>
            <person name="Bryant D.A."/>
            <person name="Richardson P."/>
        </authorList>
    </citation>
    <scope>NUCLEOTIDE SEQUENCE [LARGE SCALE GENOMIC DNA]</scope>
    <source>
        <strain>DSM 266 / SMG 266 / 2430</strain>
    </source>
</reference>
<name>MNMG_CHLPD</name>
<comment type="function">
    <text evidence="1">NAD-binding protein involved in the addition of a carboxymethylaminomethyl (cmnm) group at the wobble position (U34) of certain tRNAs, forming tRNA-cmnm(5)s(2)U34.</text>
</comment>
<comment type="cofactor">
    <cofactor evidence="1">
        <name>FAD</name>
        <dbReference type="ChEBI" id="CHEBI:57692"/>
    </cofactor>
</comment>
<comment type="subunit">
    <text evidence="1">Homodimer. Heterotetramer of two MnmE and two MnmG subunits.</text>
</comment>
<comment type="subcellular location">
    <subcellularLocation>
        <location evidence="1">Cytoplasm</location>
    </subcellularLocation>
</comment>
<comment type="similarity">
    <text evidence="1">Belongs to the MnmG family.</text>
</comment>
<keyword id="KW-0963">Cytoplasm</keyword>
<keyword id="KW-0274">FAD</keyword>
<keyword id="KW-0285">Flavoprotein</keyword>
<keyword id="KW-0520">NAD</keyword>
<keyword id="KW-1185">Reference proteome</keyword>
<keyword id="KW-0819">tRNA processing</keyword>
<accession>A1BCG1</accession>
<gene>
    <name evidence="1" type="primary">mnmG</name>
    <name evidence="1" type="synonym">gidA</name>
    <name type="ordered locus">Cpha266_0028</name>
</gene>
<sequence length="621" mass="68177">MYDIIVAGAGHAGCEAVLAAARTGMSCLLITSDLSAIARMSCNPAIGGVAKGQITREIDALGGEMAKAIDETGIQFRMLNKSKGAAMHSPRAQADRALYSVYMRKIIEEQDNIDLVQDTVTGLDVESGAVRGAILPSGRIIKGKSVILCCGTFLNGLIHIGMNHFPGGRTIAEPPVSGLTENLQSLGFRAGRLKTGTPPRIDSRSVNYSLVEEQSGDPDPRPFSFHTDSLGHRAQVSCFVTKTKETTHELLRTGFSRSPLFSGKVQGVGPRYCPSVEDKIFRFPDKNSHHIFLEPEGAETNEMYVNGFSTSLPEDIQLLALRSIPGLEHVKMIRPGYAIEYDFFFPYQIKNTLETKIIENLYFAGQINGTSGYEEAAAQGLMAGINASLKIQNRKPFVLDRSQAYIGVLIDDLVTKDIIEPYRMFTSSAEHRISLRHDNADIRLCRMGHEAGTVDFSSFTKTEYKISAIRQLRQLCDTMKLHPDQIISAMAGAAQQPPLQPIAISNLLKRPEIDFENLLVLSEDFRAGVNEITTDPDVFEQVVIDLKYEGYLKRDLLMTEKIARLESHSIPGSFSYATVSGLSNEGREKLTLHKPETIGQASRIPGVSPSDISVLLIKIGR</sequence>
<feature type="chain" id="PRO_1000016578" description="tRNA uridine 5-carboxymethylaminomethyl modification enzyme MnmG">
    <location>
        <begin position="1"/>
        <end position="621"/>
    </location>
</feature>
<feature type="binding site" evidence="1">
    <location>
        <begin position="8"/>
        <end position="13"/>
    </location>
    <ligand>
        <name>FAD</name>
        <dbReference type="ChEBI" id="CHEBI:57692"/>
    </ligand>
</feature>
<feature type="binding site" evidence="1">
    <location>
        <begin position="269"/>
        <end position="283"/>
    </location>
    <ligand>
        <name>NAD(+)</name>
        <dbReference type="ChEBI" id="CHEBI:57540"/>
    </ligand>
</feature>
<proteinExistence type="inferred from homology"/>
<dbReference type="EMBL" id="CP000492">
    <property type="protein sequence ID" value="ABL64098.1"/>
    <property type="molecule type" value="Genomic_DNA"/>
</dbReference>
<dbReference type="RefSeq" id="WP_011743940.1">
    <property type="nucleotide sequence ID" value="NC_008639.1"/>
</dbReference>
<dbReference type="SMR" id="A1BCG1"/>
<dbReference type="STRING" id="290317.Cpha266_0028"/>
<dbReference type="KEGG" id="cph:Cpha266_0028"/>
<dbReference type="eggNOG" id="COG0445">
    <property type="taxonomic scope" value="Bacteria"/>
</dbReference>
<dbReference type="HOGENOM" id="CLU_007831_2_2_10"/>
<dbReference type="OrthoDB" id="9815560at2"/>
<dbReference type="Proteomes" id="UP000008701">
    <property type="component" value="Chromosome"/>
</dbReference>
<dbReference type="GO" id="GO:0005829">
    <property type="term" value="C:cytosol"/>
    <property type="evidence" value="ECO:0007669"/>
    <property type="project" value="TreeGrafter"/>
</dbReference>
<dbReference type="GO" id="GO:0050660">
    <property type="term" value="F:flavin adenine dinucleotide binding"/>
    <property type="evidence" value="ECO:0007669"/>
    <property type="project" value="UniProtKB-UniRule"/>
</dbReference>
<dbReference type="GO" id="GO:0030488">
    <property type="term" value="P:tRNA methylation"/>
    <property type="evidence" value="ECO:0007669"/>
    <property type="project" value="TreeGrafter"/>
</dbReference>
<dbReference type="GO" id="GO:0002098">
    <property type="term" value="P:tRNA wobble uridine modification"/>
    <property type="evidence" value="ECO:0007669"/>
    <property type="project" value="InterPro"/>
</dbReference>
<dbReference type="FunFam" id="1.10.150.570:FF:000001">
    <property type="entry name" value="tRNA uridine 5-carboxymethylaminomethyl modification enzyme MnmG"/>
    <property type="match status" value="1"/>
</dbReference>
<dbReference type="FunFam" id="3.50.50.60:FF:000002">
    <property type="entry name" value="tRNA uridine 5-carboxymethylaminomethyl modification enzyme MnmG"/>
    <property type="match status" value="1"/>
</dbReference>
<dbReference type="Gene3D" id="3.50.50.60">
    <property type="entry name" value="FAD/NAD(P)-binding domain"/>
    <property type="match status" value="2"/>
</dbReference>
<dbReference type="Gene3D" id="1.10.150.570">
    <property type="entry name" value="GidA associated domain, C-terminal subdomain"/>
    <property type="match status" value="1"/>
</dbReference>
<dbReference type="Gene3D" id="1.10.10.1800">
    <property type="entry name" value="tRNA uridine 5-carboxymethylaminomethyl modification enzyme MnmG/GidA"/>
    <property type="match status" value="1"/>
</dbReference>
<dbReference type="HAMAP" id="MF_00129">
    <property type="entry name" value="MnmG_GidA"/>
    <property type="match status" value="1"/>
</dbReference>
<dbReference type="InterPro" id="IPR036188">
    <property type="entry name" value="FAD/NAD-bd_sf"/>
</dbReference>
<dbReference type="InterPro" id="IPR049312">
    <property type="entry name" value="GIDA_C_N"/>
</dbReference>
<dbReference type="InterPro" id="IPR004416">
    <property type="entry name" value="MnmG"/>
</dbReference>
<dbReference type="InterPro" id="IPR002218">
    <property type="entry name" value="MnmG-rel"/>
</dbReference>
<dbReference type="InterPro" id="IPR020595">
    <property type="entry name" value="MnmG-rel_CS"/>
</dbReference>
<dbReference type="InterPro" id="IPR026904">
    <property type="entry name" value="MnmG_C"/>
</dbReference>
<dbReference type="InterPro" id="IPR047001">
    <property type="entry name" value="MnmG_C_subdom"/>
</dbReference>
<dbReference type="InterPro" id="IPR044920">
    <property type="entry name" value="MnmG_C_subdom_sf"/>
</dbReference>
<dbReference type="InterPro" id="IPR040131">
    <property type="entry name" value="MnmG_N"/>
</dbReference>
<dbReference type="NCBIfam" id="TIGR00136">
    <property type="entry name" value="mnmG_gidA"/>
    <property type="match status" value="1"/>
</dbReference>
<dbReference type="PANTHER" id="PTHR11806">
    <property type="entry name" value="GLUCOSE INHIBITED DIVISION PROTEIN A"/>
    <property type="match status" value="1"/>
</dbReference>
<dbReference type="PANTHER" id="PTHR11806:SF0">
    <property type="entry name" value="PROTEIN MTO1 HOMOLOG, MITOCHONDRIAL"/>
    <property type="match status" value="1"/>
</dbReference>
<dbReference type="Pfam" id="PF01134">
    <property type="entry name" value="GIDA"/>
    <property type="match status" value="1"/>
</dbReference>
<dbReference type="Pfam" id="PF21680">
    <property type="entry name" value="GIDA_C_1st"/>
    <property type="match status" value="1"/>
</dbReference>
<dbReference type="Pfam" id="PF13932">
    <property type="entry name" value="SAM_GIDA_C"/>
    <property type="match status" value="1"/>
</dbReference>
<dbReference type="SMART" id="SM01228">
    <property type="entry name" value="GIDA_assoc_3"/>
    <property type="match status" value="1"/>
</dbReference>
<dbReference type="SUPFAM" id="SSF51905">
    <property type="entry name" value="FAD/NAD(P)-binding domain"/>
    <property type="match status" value="1"/>
</dbReference>
<dbReference type="PROSITE" id="PS01280">
    <property type="entry name" value="GIDA_1"/>
    <property type="match status" value="1"/>
</dbReference>
<dbReference type="PROSITE" id="PS01281">
    <property type="entry name" value="GIDA_2"/>
    <property type="match status" value="1"/>
</dbReference>
<protein>
    <recommendedName>
        <fullName evidence="1">tRNA uridine 5-carboxymethylaminomethyl modification enzyme MnmG</fullName>
    </recommendedName>
    <alternativeName>
        <fullName evidence="1">Glucose-inhibited division protein A</fullName>
    </alternativeName>
</protein>
<evidence type="ECO:0000255" key="1">
    <source>
        <dbReference type="HAMAP-Rule" id="MF_00129"/>
    </source>
</evidence>